<accession>P23499</accession>
<organism>
    <name type="scientific">Coturnix japonica</name>
    <name type="common">Japanese quail</name>
    <name type="synonym">Coturnix coturnix japonica</name>
    <dbReference type="NCBI Taxonomy" id="93934"/>
    <lineage>
        <taxon>Eukaryota</taxon>
        <taxon>Metazoa</taxon>
        <taxon>Chordata</taxon>
        <taxon>Craniata</taxon>
        <taxon>Vertebrata</taxon>
        <taxon>Euteleostomi</taxon>
        <taxon>Archelosauria</taxon>
        <taxon>Archosauria</taxon>
        <taxon>Dinosauria</taxon>
        <taxon>Saurischia</taxon>
        <taxon>Theropoda</taxon>
        <taxon>Coelurosauria</taxon>
        <taxon>Aves</taxon>
        <taxon>Neognathae</taxon>
        <taxon>Galloanserae</taxon>
        <taxon>Galliformes</taxon>
        <taxon>Phasianidae</taxon>
        <taxon>Perdicinae</taxon>
        <taxon>Coturnix</taxon>
    </lineage>
</organism>
<reference key="1">
    <citation type="journal article" date="1991" name="Proc. Natl. Acad. Sci. U.S.A.">
        <title>Transcription of a quail gene expressed in embryonic retinal cells is shut off sharply at hatching.</title>
        <authorList>
            <person name="Guermah M."/>
            <person name="Crisanti P."/>
            <person name="Laugier D."/>
            <person name="Dezelee P."/>
            <person name="Bidou L."/>
            <person name="Pessac B."/>
            <person name="Calothy G."/>
        </authorList>
    </citation>
    <scope>NUCLEOTIDE SEQUENCE [MRNA]</scope>
</reference>
<dbReference type="EMBL" id="M61908">
    <property type="protein sequence ID" value="AAA49499.1"/>
    <property type="molecule type" value="mRNA"/>
</dbReference>
<dbReference type="EMBL" id="M61908">
    <property type="protein sequence ID" value="AAA49500.1"/>
    <property type="molecule type" value="mRNA"/>
</dbReference>
<dbReference type="PIR" id="A39379">
    <property type="entry name" value="A39379"/>
</dbReference>
<dbReference type="SMR" id="P23499"/>
<dbReference type="GlyCosmos" id="P23499">
    <property type="glycosylation" value="6 sites, No reported glycans"/>
</dbReference>
<dbReference type="Proteomes" id="UP000694412">
    <property type="component" value="Unplaced"/>
</dbReference>
<dbReference type="GO" id="GO:0005615">
    <property type="term" value="C:extracellular space"/>
    <property type="evidence" value="ECO:0007669"/>
    <property type="project" value="InterPro"/>
</dbReference>
<dbReference type="GO" id="GO:0005509">
    <property type="term" value="F:calcium ion binding"/>
    <property type="evidence" value="ECO:0007669"/>
    <property type="project" value="InterPro"/>
</dbReference>
<dbReference type="GO" id="GO:0005518">
    <property type="term" value="F:collagen binding"/>
    <property type="evidence" value="ECO:0007669"/>
    <property type="project" value="TreeGrafter"/>
</dbReference>
<dbReference type="GO" id="GO:0050840">
    <property type="term" value="F:extracellular matrix binding"/>
    <property type="evidence" value="ECO:0007669"/>
    <property type="project" value="TreeGrafter"/>
</dbReference>
<dbReference type="GO" id="GO:0007165">
    <property type="term" value="P:signal transduction"/>
    <property type="evidence" value="ECO:0007669"/>
    <property type="project" value="InterPro"/>
</dbReference>
<dbReference type="CDD" id="cd16236">
    <property type="entry name" value="EFh_SPARC_SPARCL1"/>
    <property type="match status" value="1"/>
</dbReference>
<dbReference type="FunFam" id="1.10.238.10:FF:000068">
    <property type="entry name" value="SPARC isoform 1"/>
    <property type="match status" value="1"/>
</dbReference>
<dbReference type="FunFam" id="3.30.60.30:FF:000004">
    <property type="entry name" value="SPARC isoform 1"/>
    <property type="match status" value="1"/>
</dbReference>
<dbReference type="Gene3D" id="3.30.60.30">
    <property type="match status" value="1"/>
</dbReference>
<dbReference type="Gene3D" id="1.10.238.10">
    <property type="entry name" value="EF-hand"/>
    <property type="match status" value="1"/>
</dbReference>
<dbReference type="InterPro" id="IPR011992">
    <property type="entry name" value="EF-hand-dom_pair"/>
</dbReference>
<dbReference type="InterPro" id="IPR018247">
    <property type="entry name" value="EF_Hand_1_Ca_BS"/>
</dbReference>
<dbReference type="InterPro" id="IPR002048">
    <property type="entry name" value="EF_hand_dom"/>
</dbReference>
<dbReference type="InterPro" id="IPR003645">
    <property type="entry name" value="Fol_N"/>
</dbReference>
<dbReference type="InterPro" id="IPR015369">
    <property type="entry name" value="Follistatin/Osteonectin_EGF"/>
</dbReference>
<dbReference type="InterPro" id="IPR002350">
    <property type="entry name" value="Kazal_dom"/>
</dbReference>
<dbReference type="InterPro" id="IPR036058">
    <property type="entry name" value="Kazal_dom_sf"/>
</dbReference>
<dbReference type="InterPro" id="IPR001999">
    <property type="entry name" value="Osteonectin_CS"/>
</dbReference>
<dbReference type="InterPro" id="IPR016359">
    <property type="entry name" value="SPARC-like_p1"/>
</dbReference>
<dbReference type="InterPro" id="IPR019577">
    <property type="entry name" value="SPARC/Testican_Ca-bd-dom"/>
</dbReference>
<dbReference type="PANTHER" id="PTHR13866">
    <property type="entry name" value="SPARC OSTEONECTIN"/>
    <property type="match status" value="1"/>
</dbReference>
<dbReference type="PANTHER" id="PTHR13866:SF16">
    <property type="entry name" value="SPARC-LIKE PROTEIN 1"/>
    <property type="match status" value="1"/>
</dbReference>
<dbReference type="Pfam" id="PF09289">
    <property type="entry name" value="FOLN"/>
    <property type="match status" value="1"/>
</dbReference>
<dbReference type="Pfam" id="PF00050">
    <property type="entry name" value="Kazal_1"/>
    <property type="match status" value="1"/>
</dbReference>
<dbReference type="Pfam" id="PF10591">
    <property type="entry name" value="SPARC_Ca_bdg"/>
    <property type="match status" value="1"/>
</dbReference>
<dbReference type="PIRSF" id="PIRSF002574">
    <property type="entry name" value="SPARC-like_p1"/>
    <property type="match status" value="1"/>
</dbReference>
<dbReference type="SMART" id="SM00274">
    <property type="entry name" value="FOLN"/>
    <property type="match status" value="1"/>
</dbReference>
<dbReference type="SMART" id="SM00280">
    <property type="entry name" value="KAZAL"/>
    <property type="match status" value="1"/>
</dbReference>
<dbReference type="SUPFAM" id="SSF47473">
    <property type="entry name" value="EF-hand"/>
    <property type="match status" value="1"/>
</dbReference>
<dbReference type="SUPFAM" id="SSF57196">
    <property type="entry name" value="EGF/Laminin"/>
    <property type="match status" value="1"/>
</dbReference>
<dbReference type="SUPFAM" id="SSF100895">
    <property type="entry name" value="Kazal-type serine protease inhibitors"/>
    <property type="match status" value="1"/>
</dbReference>
<dbReference type="PROSITE" id="PS00018">
    <property type="entry name" value="EF_HAND_1"/>
    <property type="match status" value="1"/>
</dbReference>
<dbReference type="PROSITE" id="PS50222">
    <property type="entry name" value="EF_HAND_2"/>
    <property type="match status" value="1"/>
</dbReference>
<dbReference type="PROSITE" id="PS51465">
    <property type="entry name" value="KAZAL_2"/>
    <property type="match status" value="1"/>
</dbReference>
<dbReference type="PROSITE" id="PS00612">
    <property type="entry name" value="OSTEONECTIN_1"/>
    <property type="match status" value="1"/>
</dbReference>
<dbReference type="PROSITE" id="PS00613">
    <property type="entry name" value="OSTEONECTIN_2"/>
    <property type="match status" value="1"/>
</dbReference>
<keyword id="KW-0106">Calcium</keyword>
<keyword id="KW-1015">Disulfide bond</keyword>
<keyword id="KW-0272">Extracellular matrix</keyword>
<keyword id="KW-0325">Glycoprotein</keyword>
<keyword id="KW-0479">Metal-binding</keyword>
<keyword id="KW-1185">Reference proteome</keyword>
<keyword id="KW-0964">Secreted</keyword>
<keyword id="KW-0732">Signal</keyword>
<feature type="signal peptide">
    <location>
        <begin position="1"/>
        <end position="16"/>
    </location>
</feature>
<feature type="chain" id="PRO_0000020315" description="SPARC-like protein 1">
    <location>
        <begin position="17"/>
        <end position="676"/>
    </location>
</feature>
<feature type="domain" description="Follistatin-like">
    <location>
        <begin position="444"/>
        <end position="466"/>
    </location>
</feature>
<feature type="domain" description="Kazal-like" evidence="4">
    <location>
        <begin position="462"/>
        <end position="523"/>
    </location>
</feature>
<feature type="domain" description="EF-hand" evidence="3">
    <location>
        <begin position="634"/>
        <end position="669"/>
    </location>
</feature>
<feature type="region of interest" description="Disordered" evidence="5">
    <location>
        <begin position="35"/>
        <end position="151"/>
    </location>
</feature>
<feature type="region of interest" description="Disordered" evidence="5">
    <location>
        <begin position="173"/>
        <end position="369"/>
    </location>
</feature>
<feature type="region of interest" description="Disordered" evidence="5">
    <location>
        <begin position="385"/>
        <end position="437"/>
    </location>
</feature>
<feature type="compositionally biased region" description="Basic and acidic residues" evidence="5">
    <location>
        <begin position="35"/>
        <end position="44"/>
    </location>
</feature>
<feature type="compositionally biased region" description="Polar residues" evidence="5">
    <location>
        <begin position="95"/>
        <end position="108"/>
    </location>
</feature>
<feature type="compositionally biased region" description="Acidic residues" evidence="5">
    <location>
        <begin position="184"/>
        <end position="202"/>
    </location>
</feature>
<feature type="compositionally biased region" description="Basic and acidic residues" evidence="5">
    <location>
        <begin position="249"/>
        <end position="266"/>
    </location>
</feature>
<feature type="compositionally biased region" description="Basic and acidic residues" evidence="5">
    <location>
        <begin position="273"/>
        <end position="291"/>
    </location>
</feature>
<feature type="compositionally biased region" description="Acidic residues" evidence="5">
    <location>
        <begin position="312"/>
        <end position="328"/>
    </location>
</feature>
<feature type="compositionally biased region" description="Basic and acidic residues" evidence="5">
    <location>
        <begin position="385"/>
        <end position="394"/>
    </location>
</feature>
<feature type="compositionally biased region" description="Low complexity" evidence="5">
    <location>
        <begin position="397"/>
        <end position="408"/>
    </location>
</feature>
<feature type="compositionally biased region" description="Basic and acidic residues" evidence="5">
    <location>
        <begin position="415"/>
        <end position="433"/>
    </location>
</feature>
<feature type="binding site" evidence="3">
    <location>
        <position position="647"/>
    </location>
    <ligand>
        <name>Ca(2+)</name>
        <dbReference type="ChEBI" id="CHEBI:29108"/>
    </ligand>
</feature>
<feature type="binding site" evidence="3">
    <location>
        <position position="649"/>
    </location>
    <ligand>
        <name>Ca(2+)</name>
        <dbReference type="ChEBI" id="CHEBI:29108"/>
    </ligand>
</feature>
<feature type="binding site" evidence="3">
    <location>
        <position position="651"/>
    </location>
    <ligand>
        <name>Ca(2+)</name>
        <dbReference type="ChEBI" id="CHEBI:29108"/>
    </ligand>
</feature>
<feature type="binding site" evidence="3">
    <location>
        <position position="658"/>
    </location>
    <ligand>
        <name>Ca(2+)</name>
        <dbReference type="ChEBI" id="CHEBI:29108"/>
    </ligand>
</feature>
<feature type="glycosylation site" description="N-linked (GlcNAc...) asparagine" evidence="2">
    <location>
        <position position="182"/>
    </location>
</feature>
<feature type="glycosylation site" description="N-linked (GlcNAc...) asparagine" evidence="2">
    <location>
        <position position="318"/>
    </location>
</feature>
<feature type="glycosylation site" description="N-linked (GlcNAc...) asparagine" evidence="2">
    <location>
        <position position="396"/>
    </location>
</feature>
<feature type="glycosylation site" description="N-linked (GlcNAc...) asparagine" evidence="2">
    <location>
        <position position="413"/>
    </location>
</feature>
<feature type="glycosylation site" description="N-linked (GlcNAc...) asparagine" evidence="2">
    <location>
        <position position="435"/>
    </location>
</feature>
<feature type="glycosylation site" description="N-linked (GlcNAc...) asparagine" evidence="2">
    <location>
        <position position="488"/>
    </location>
</feature>
<feature type="disulfide bond" evidence="4">
    <location>
        <begin position="445"/>
        <end position="456"/>
    </location>
</feature>
<feature type="disulfide bond" evidence="4">
    <location>
        <begin position="450"/>
        <end position="466"/>
    </location>
</feature>
<feature type="disulfide bond" evidence="4">
    <location>
        <begin position="468"/>
        <end position="502"/>
    </location>
</feature>
<feature type="disulfide bond" evidence="4">
    <location>
        <begin position="474"/>
        <end position="495"/>
    </location>
</feature>
<feature type="disulfide bond" evidence="4">
    <location>
        <begin position="484"/>
        <end position="521"/>
    </location>
</feature>
<feature type="disulfide bond" evidence="4">
    <location>
        <begin position="527"/>
        <end position="638"/>
    </location>
</feature>
<feature type="disulfide bond" evidence="4">
    <location>
        <begin position="646"/>
        <end position="662"/>
    </location>
</feature>
<evidence type="ECO:0000250" key="1"/>
<evidence type="ECO:0000255" key="2"/>
<evidence type="ECO:0000255" key="3">
    <source>
        <dbReference type="PROSITE-ProRule" id="PRU00448"/>
    </source>
</evidence>
<evidence type="ECO:0000255" key="4">
    <source>
        <dbReference type="PROSITE-ProRule" id="PRU00798"/>
    </source>
</evidence>
<evidence type="ECO:0000256" key="5">
    <source>
        <dbReference type="SAM" id="MobiDB-lite"/>
    </source>
</evidence>
<evidence type="ECO:0000305" key="6"/>
<protein>
    <recommendedName>
        <fullName>SPARC-like protein 1</fullName>
    </recommendedName>
    <alternativeName>
        <fullName>QR1 protein</fullName>
    </alternativeName>
</protein>
<name>SPRL1_COTJA</name>
<gene>
    <name type="primary">SPARCL1</name>
    <name type="synonym">QR1</name>
</gene>
<sequence>MKTVLLLICLLGSAFTTPTDPLNYQFGAHGQKTAEKHKYTHSEMPEEENTGFVNKGDVLSGHRTIKAEVPVLDTQKDEPWASRRQGQGDGEHQTKNSLRSINFLTLHSNPGLASDNQESNSGSSREQHSSEHHQPRRHRKHGNMAGQWALRGESPVDALGLVRERNTWKYNKNTVGLDENNNGSEEEEAGEEEDEEWGEETDYRDMKHRARGTSHGREYRRWQNENSRPSGEFLRDSSLPVRITKRHGEKFSMEEESQEKLYKEGKLPLSKKNHNEDQGEKRQSEESKEHFQVVNQRKHRAVTKRQDKEGSNAEEDDNDSGDDGEEDLGNVWREAVYEEEERMQSNDQDSITNKQKEEITAGDDSGVYREMQDYKGDKIKDVTHSEDNHYHHEPPNSSSKQQLQTSSSVESMNSTEHEDEVKTTGGSYHEESARNSTGKALPDLCRNFHCKRGKVCQADKQGKPSCICQDPAACPSTKDYKRVCGTDNKTYDGTCQLFGTKCQLEGTKMGRQLHLDYMGACKHIPHCTDYEVNQFPLRMRDWLKNILMQYYERDQDTSAFLTEKQRNKVKKIYLNEKRLVSGEHPVELLLHDFEKNYHMYLYPVHWQFYQLDQHPVDRSLTHSELAPLRASLVPMEHCITRFFQECDGDQDKLITLKEWCHCFAIKEEDINENLLF</sequence>
<comment type="function">
    <text>Could play a role in the late stage of neuroretina morphogenesis.</text>
</comment>
<comment type="subcellular location">
    <subcellularLocation>
        <location evidence="1">Secreted</location>
        <location evidence="1">Extracellular space</location>
        <location evidence="1">Extracellular matrix</location>
    </subcellularLocation>
</comment>
<comment type="tissue specificity">
    <text>Glial (Mueller) cells of the neuroretina.</text>
</comment>
<comment type="developmental stage">
    <text>Is transcribed at late phase of retinal development in the embryo, and is shut off sharply at hatching.</text>
</comment>
<comment type="similarity">
    <text evidence="6">Belongs to the SPARC family.</text>
</comment>
<proteinExistence type="evidence at transcript level"/>